<gene>
    <name evidence="1" type="primary">rplA</name>
    <name type="ordered locus">ACL_0167</name>
</gene>
<organism>
    <name type="scientific">Acholeplasma laidlawii (strain PG-8A)</name>
    <dbReference type="NCBI Taxonomy" id="441768"/>
    <lineage>
        <taxon>Bacteria</taxon>
        <taxon>Bacillati</taxon>
        <taxon>Mycoplasmatota</taxon>
        <taxon>Mollicutes</taxon>
        <taxon>Acholeplasmatales</taxon>
        <taxon>Acholeplasmataceae</taxon>
        <taxon>Acholeplasma</taxon>
    </lineage>
</organism>
<evidence type="ECO:0000255" key="1">
    <source>
        <dbReference type="HAMAP-Rule" id="MF_01318"/>
    </source>
</evidence>
<evidence type="ECO:0000305" key="2"/>
<reference key="1">
    <citation type="journal article" date="2011" name="J. Bacteriol.">
        <title>Complete genome and proteome of Acholeplasma laidlawii.</title>
        <authorList>
            <person name="Lazarev V.N."/>
            <person name="Levitskii S.A."/>
            <person name="Basovskii Y.I."/>
            <person name="Chukin M.M."/>
            <person name="Akopian T.A."/>
            <person name="Vereshchagin V.V."/>
            <person name="Kostrjukova E.S."/>
            <person name="Kovaleva G.Y."/>
            <person name="Kazanov M.D."/>
            <person name="Malko D.B."/>
            <person name="Vitreschak A.G."/>
            <person name="Sernova N.V."/>
            <person name="Gelfand M.S."/>
            <person name="Demina I.A."/>
            <person name="Serebryakova M.V."/>
            <person name="Galyamina M.A."/>
            <person name="Vtyurin N.N."/>
            <person name="Rogov S.I."/>
            <person name="Alexeev D.G."/>
            <person name="Ladygina V.G."/>
            <person name="Govorun V.M."/>
        </authorList>
    </citation>
    <scope>NUCLEOTIDE SEQUENCE [LARGE SCALE GENOMIC DNA]</scope>
    <source>
        <strain>PG-8A</strain>
    </source>
</reference>
<protein>
    <recommendedName>
        <fullName evidence="1">Large ribosomal subunit protein uL1</fullName>
    </recommendedName>
    <alternativeName>
        <fullName evidence="2">50S ribosomal protein L1</fullName>
    </alternativeName>
</protein>
<proteinExistence type="inferred from homology"/>
<dbReference type="EMBL" id="CP000896">
    <property type="protein sequence ID" value="ABX80793.1"/>
    <property type="molecule type" value="Genomic_DNA"/>
</dbReference>
<dbReference type="RefSeq" id="WP_012242124.1">
    <property type="nucleotide sequence ID" value="NC_010163.1"/>
</dbReference>
<dbReference type="SMR" id="A9NEL3"/>
<dbReference type="STRING" id="441768.ACL_0167"/>
<dbReference type="GeneID" id="41338360"/>
<dbReference type="KEGG" id="acl:ACL_0167"/>
<dbReference type="eggNOG" id="COG0081">
    <property type="taxonomic scope" value="Bacteria"/>
</dbReference>
<dbReference type="HOGENOM" id="CLU_062853_0_0_14"/>
<dbReference type="OrthoDB" id="9803740at2"/>
<dbReference type="Proteomes" id="UP000008558">
    <property type="component" value="Chromosome"/>
</dbReference>
<dbReference type="GO" id="GO:0015934">
    <property type="term" value="C:large ribosomal subunit"/>
    <property type="evidence" value="ECO:0007669"/>
    <property type="project" value="InterPro"/>
</dbReference>
<dbReference type="GO" id="GO:0019843">
    <property type="term" value="F:rRNA binding"/>
    <property type="evidence" value="ECO:0007669"/>
    <property type="project" value="UniProtKB-UniRule"/>
</dbReference>
<dbReference type="GO" id="GO:0003735">
    <property type="term" value="F:structural constituent of ribosome"/>
    <property type="evidence" value="ECO:0007669"/>
    <property type="project" value="InterPro"/>
</dbReference>
<dbReference type="GO" id="GO:0000049">
    <property type="term" value="F:tRNA binding"/>
    <property type="evidence" value="ECO:0007669"/>
    <property type="project" value="UniProtKB-KW"/>
</dbReference>
<dbReference type="GO" id="GO:0006417">
    <property type="term" value="P:regulation of translation"/>
    <property type="evidence" value="ECO:0007669"/>
    <property type="project" value="UniProtKB-KW"/>
</dbReference>
<dbReference type="GO" id="GO:0006412">
    <property type="term" value="P:translation"/>
    <property type="evidence" value="ECO:0007669"/>
    <property type="project" value="UniProtKB-UniRule"/>
</dbReference>
<dbReference type="CDD" id="cd00403">
    <property type="entry name" value="Ribosomal_L1"/>
    <property type="match status" value="1"/>
</dbReference>
<dbReference type="FunFam" id="3.40.50.790:FF:000001">
    <property type="entry name" value="50S ribosomal protein L1"/>
    <property type="match status" value="1"/>
</dbReference>
<dbReference type="Gene3D" id="3.30.190.20">
    <property type="match status" value="1"/>
</dbReference>
<dbReference type="Gene3D" id="3.40.50.790">
    <property type="match status" value="1"/>
</dbReference>
<dbReference type="HAMAP" id="MF_01318_B">
    <property type="entry name" value="Ribosomal_uL1_B"/>
    <property type="match status" value="1"/>
</dbReference>
<dbReference type="InterPro" id="IPR005878">
    <property type="entry name" value="Ribosom_uL1_bac-type"/>
</dbReference>
<dbReference type="InterPro" id="IPR002143">
    <property type="entry name" value="Ribosomal_uL1"/>
</dbReference>
<dbReference type="InterPro" id="IPR023674">
    <property type="entry name" value="Ribosomal_uL1-like"/>
</dbReference>
<dbReference type="InterPro" id="IPR028364">
    <property type="entry name" value="Ribosomal_uL1/biogenesis"/>
</dbReference>
<dbReference type="InterPro" id="IPR016095">
    <property type="entry name" value="Ribosomal_uL1_3-a/b-sand"/>
</dbReference>
<dbReference type="InterPro" id="IPR023673">
    <property type="entry name" value="Ribosomal_uL1_CS"/>
</dbReference>
<dbReference type="NCBIfam" id="TIGR01169">
    <property type="entry name" value="rplA_bact"/>
    <property type="match status" value="1"/>
</dbReference>
<dbReference type="PANTHER" id="PTHR36427">
    <property type="entry name" value="54S RIBOSOMAL PROTEIN L1, MITOCHONDRIAL"/>
    <property type="match status" value="1"/>
</dbReference>
<dbReference type="PANTHER" id="PTHR36427:SF3">
    <property type="entry name" value="LARGE RIBOSOMAL SUBUNIT PROTEIN UL1M"/>
    <property type="match status" value="1"/>
</dbReference>
<dbReference type="Pfam" id="PF00687">
    <property type="entry name" value="Ribosomal_L1"/>
    <property type="match status" value="1"/>
</dbReference>
<dbReference type="PIRSF" id="PIRSF002155">
    <property type="entry name" value="Ribosomal_L1"/>
    <property type="match status" value="1"/>
</dbReference>
<dbReference type="SUPFAM" id="SSF56808">
    <property type="entry name" value="Ribosomal protein L1"/>
    <property type="match status" value="1"/>
</dbReference>
<dbReference type="PROSITE" id="PS01199">
    <property type="entry name" value="RIBOSOMAL_L1"/>
    <property type="match status" value="1"/>
</dbReference>
<sequence length="230" mass="24916">MKRGKKYLEAVKLYDKSVAYTGLEAVELAKKTSVAKFDATVEVAFRLNVDPRKADQNLRGAISLPHGTGKTVRVVVIAKPEKAKEALAAGALEAGDVELIDKIGKGWFDFDVMVATPDMMAQLGKLGRVLGPKGLMPNPKTGTVTLDVAKAVEEIKAGKIEYRTDKVGNIHAPIGKVSFDSNKLHENMLAIYNQLVRIKPATVKGTYIKKIALSTTMGPGIMVEENNIKK</sequence>
<keyword id="KW-1185">Reference proteome</keyword>
<keyword id="KW-0678">Repressor</keyword>
<keyword id="KW-0687">Ribonucleoprotein</keyword>
<keyword id="KW-0689">Ribosomal protein</keyword>
<keyword id="KW-0694">RNA-binding</keyword>
<keyword id="KW-0699">rRNA-binding</keyword>
<keyword id="KW-0810">Translation regulation</keyword>
<keyword id="KW-0820">tRNA-binding</keyword>
<name>RL1_ACHLI</name>
<feature type="chain" id="PRO_1000086270" description="Large ribosomal subunit protein uL1">
    <location>
        <begin position="1"/>
        <end position="230"/>
    </location>
</feature>
<comment type="function">
    <text evidence="1">Binds directly to 23S rRNA. The L1 stalk is quite mobile in the ribosome, and is involved in E site tRNA release.</text>
</comment>
<comment type="function">
    <text evidence="1">Protein L1 is also a translational repressor protein, it controls the translation of the L11 operon by binding to its mRNA.</text>
</comment>
<comment type="subunit">
    <text evidence="1">Part of the 50S ribosomal subunit.</text>
</comment>
<comment type="similarity">
    <text evidence="1">Belongs to the universal ribosomal protein uL1 family.</text>
</comment>
<accession>A9NEL3</accession>